<name>PLSY_DEIGD</name>
<accession>Q1IXF1</accession>
<feature type="chain" id="PRO_0000250296" description="Glycerol-3-phosphate acyltransferase">
    <location>
        <begin position="1"/>
        <end position="198"/>
    </location>
</feature>
<feature type="transmembrane region" description="Helical" evidence="1">
    <location>
        <begin position="1"/>
        <end position="21"/>
    </location>
</feature>
<feature type="transmembrane region" description="Helical" evidence="1">
    <location>
        <begin position="52"/>
        <end position="72"/>
    </location>
</feature>
<feature type="transmembrane region" description="Helical" evidence="1">
    <location>
        <begin position="81"/>
        <end position="101"/>
    </location>
</feature>
<feature type="transmembrane region" description="Helical" evidence="1">
    <location>
        <begin position="115"/>
        <end position="135"/>
    </location>
</feature>
<feature type="transmembrane region" description="Helical" evidence="1">
    <location>
        <begin position="153"/>
        <end position="173"/>
    </location>
</feature>
<sequence>MILITSLAVLVSYLIGSIPAAAWVARRRGVDIRKVGSGNSGATNVLRSLGKGPALLVAAFDILKGAIAVGLARALGLDPAWTALCGVAAVLGHNFSPFLGFRGGKGVATSFGTMLALDPVVGGGAFVVGVGCIWLTRFVSAGSILGALTAVTLAAALARPGWLLLIVAFLAALLTWQHRDNIRRLQAGNERRLGEKKD</sequence>
<evidence type="ECO:0000255" key="1">
    <source>
        <dbReference type="HAMAP-Rule" id="MF_01043"/>
    </source>
</evidence>
<reference key="1">
    <citation type="submission" date="2006-04" db="EMBL/GenBank/DDBJ databases">
        <title>Complete sequence of chromosome of Deinococcus geothermalis DSM 11300.</title>
        <authorList>
            <person name="Copeland A."/>
            <person name="Lucas S."/>
            <person name="Lapidus A."/>
            <person name="Barry K."/>
            <person name="Detter J.C."/>
            <person name="Glavina del Rio T."/>
            <person name="Hammon N."/>
            <person name="Israni S."/>
            <person name="Dalin E."/>
            <person name="Tice H."/>
            <person name="Pitluck S."/>
            <person name="Brettin T."/>
            <person name="Bruce D."/>
            <person name="Han C."/>
            <person name="Tapia R."/>
            <person name="Saunders E."/>
            <person name="Gilna P."/>
            <person name="Schmutz J."/>
            <person name="Larimer F."/>
            <person name="Land M."/>
            <person name="Hauser L."/>
            <person name="Kyrpides N."/>
            <person name="Kim E."/>
            <person name="Daly M.J."/>
            <person name="Fredrickson J.K."/>
            <person name="Makarova K.S."/>
            <person name="Gaidamakova E.K."/>
            <person name="Zhai M."/>
            <person name="Richardson P."/>
        </authorList>
    </citation>
    <scope>NUCLEOTIDE SEQUENCE [LARGE SCALE GENOMIC DNA]</scope>
    <source>
        <strain>DSM 11300 / CIP 105573 / AG-3a</strain>
    </source>
</reference>
<protein>
    <recommendedName>
        <fullName evidence="1">Glycerol-3-phosphate acyltransferase</fullName>
    </recommendedName>
    <alternativeName>
        <fullName evidence="1">Acyl-PO4 G3P acyltransferase</fullName>
    </alternativeName>
    <alternativeName>
        <fullName evidence="1">Acyl-phosphate--glycerol-3-phosphate acyltransferase</fullName>
    </alternativeName>
    <alternativeName>
        <fullName evidence="1">G3P acyltransferase</fullName>
        <shortName evidence="1">GPAT</shortName>
        <ecNumber evidence="1">2.3.1.275</ecNumber>
    </alternativeName>
    <alternativeName>
        <fullName evidence="1">Lysophosphatidic acid synthase</fullName>
        <shortName evidence="1">LPA synthase</shortName>
    </alternativeName>
</protein>
<dbReference type="EC" id="2.3.1.275" evidence="1"/>
<dbReference type="EMBL" id="CP000359">
    <property type="protein sequence ID" value="ABF46083.1"/>
    <property type="molecule type" value="Genomic_DNA"/>
</dbReference>
<dbReference type="RefSeq" id="WP_011530913.1">
    <property type="nucleotide sequence ID" value="NC_008025.1"/>
</dbReference>
<dbReference type="SMR" id="Q1IXF1"/>
<dbReference type="STRING" id="319795.Dgeo_1788"/>
<dbReference type="KEGG" id="dge:Dgeo_1788"/>
<dbReference type="eggNOG" id="COG0344">
    <property type="taxonomic scope" value="Bacteria"/>
</dbReference>
<dbReference type="HOGENOM" id="CLU_081254_0_0_0"/>
<dbReference type="UniPathway" id="UPA00085"/>
<dbReference type="Proteomes" id="UP000002431">
    <property type="component" value="Chromosome"/>
</dbReference>
<dbReference type="GO" id="GO:0005886">
    <property type="term" value="C:plasma membrane"/>
    <property type="evidence" value="ECO:0007669"/>
    <property type="project" value="UniProtKB-SubCell"/>
</dbReference>
<dbReference type="GO" id="GO:0043772">
    <property type="term" value="F:acyl-phosphate glycerol-3-phosphate acyltransferase activity"/>
    <property type="evidence" value="ECO:0007669"/>
    <property type="project" value="UniProtKB-UniRule"/>
</dbReference>
<dbReference type="GO" id="GO:0008654">
    <property type="term" value="P:phospholipid biosynthetic process"/>
    <property type="evidence" value="ECO:0007669"/>
    <property type="project" value="UniProtKB-UniRule"/>
</dbReference>
<dbReference type="HAMAP" id="MF_01043">
    <property type="entry name" value="PlsY"/>
    <property type="match status" value="1"/>
</dbReference>
<dbReference type="InterPro" id="IPR003811">
    <property type="entry name" value="G3P_acylTferase_PlsY"/>
</dbReference>
<dbReference type="NCBIfam" id="TIGR00023">
    <property type="entry name" value="glycerol-3-phosphate 1-O-acyltransferase PlsY"/>
    <property type="match status" value="1"/>
</dbReference>
<dbReference type="PANTHER" id="PTHR30309:SF0">
    <property type="entry name" value="GLYCEROL-3-PHOSPHATE ACYLTRANSFERASE-RELATED"/>
    <property type="match status" value="1"/>
</dbReference>
<dbReference type="PANTHER" id="PTHR30309">
    <property type="entry name" value="INNER MEMBRANE PROTEIN YGIH"/>
    <property type="match status" value="1"/>
</dbReference>
<dbReference type="Pfam" id="PF02660">
    <property type="entry name" value="G3P_acyltransf"/>
    <property type="match status" value="1"/>
</dbReference>
<dbReference type="SMART" id="SM01207">
    <property type="entry name" value="G3P_acyltransf"/>
    <property type="match status" value="1"/>
</dbReference>
<gene>
    <name evidence="1" type="primary">plsY</name>
    <name type="ordered locus">Dgeo_1788</name>
</gene>
<proteinExistence type="inferred from homology"/>
<comment type="function">
    <text evidence="1">Catalyzes the transfer of an acyl group from acyl-phosphate (acyl-PO(4)) to glycerol-3-phosphate (G3P) to form lysophosphatidic acid (LPA). This enzyme utilizes acyl-phosphate as fatty acyl donor, but not acyl-CoA or acyl-ACP.</text>
</comment>
<comment type="catalytic activity">
    <reaction evidence="1">
        <text>an acyl phosphate + sn-glycerol 3-phosphate = a 1-acyl-sn-glycero-3-phosphate + phosphate</text>
        <dbReference type="Rhea" id="RHEA:34075"/>
        <dbReference type="ChEBI" id="CHEBI:43474"/>
        <dbReference type="ChEBI" id="CHEBI:57597"/>
        <dbReference type="ChEBI" id="CHEBI:57970"/>
        <dbReference type="ChEBI" id="CHEBI:59918"/>
        <dbReference type="EC" id="2.3.1.275"/>
    </reaction>
</comment>
<comment type="pathway">
    <text evidence="1">Lipid metabolism; phospholipid metabolism.</text>
</comment>
<comment type="subunit">
    <text evidence="1">Probably interacts with PlsX.</text>
</comment>
<comment type="subcellular location">
    <subcellularLocation>
        <location evidence="1">Cell membrane</location>
        <topology evidence="1">Multi-pass membrane protein</topology>
    </subcellularLocation>
</comment>
<comment type="similarity">
    <text evidence="1">Belongs to the PlsY family.</text>
</comment>
<keyword id="KW-1003">Cell membrane</keyword>
<keyword id="KW-0444">Lipid biosynthesis</keyword>
<keyword id="KW-0443">Lipid metabolism</keyword>
<keyword id="KW-0472">Membrane</keyword>
<keyword id="KW-0594">Phospholipid biosynthesis</keyword>
<keyword id="KW-1208">Phospholipid metabolism</keyword>
<keyword id="KW-0808">Transferase</keyword>
<keyword id="KW-0812">Transmembrane</keyword>
<keyword id="KW-1133">Transmembrane helix</keyword>
<organism>
    <name type="scientific">Deinococcus geothermalis (strain DSM 11300 / CIP 105573 / AG-3a)</name>
    <dbReference type="NCBI Taxonomy" id="319795"/>
    <lineage>
        <taxon>Bacteria</taxon>
        <taxon>Thermotogati</taxon>
        <taxon>Deinococcota</taxon>
        <taxon>Deinococci</taxon>
        <taxon>Deinococcales</taxon>
        <taxon>Deinococcaceae</taxon>
        <taxon>Deinococcus</taxon>
    </lineage>
</organism>